<comment type="function">
    <text evidence="1">Virulence factor affecting bacterial dissemination and survival within the host. Has magnesium-dependent catalytic activity toward sphingomyelin (SM) and acyl- and alkyl-lysophosphatidylcholine (LPC), but not toward sphingosylphosphorylcholine (SPC) and phosphatidylcholine (PC). Lysophosphatidic acid (LPA), assumed to result from LPC hydrolysis, evokes pathophysiological responses after LPA receptor internalization. Shows hemolytic activity.</text>
</comment>
<comment type="catalytic activity">
    <reaction evidence="1">
        <text>a sphingomyelin + H2O = an N-acylsphing-4-enine 1-phosphate + choline + H(+)</text>
        <dbReference type="Rhea" id="RHEA:20984"/>
        <dbReference type="ChEBI" id="CHEBI:15354"/>
        <dbReference type="ChEBI" id="CHEBI:15377"/>
        <dbReference type="ChEBI" id="CHEBI:15378"/>
        <dbReference type="ChEBI" id="CHEBI:17636"/>
        <dbReference type="ChEBI" id="CHEBI:57674"/>
        <dbReference type="EC" id="3.1.4.41"/>
    </reaction>
</comment>
<comment type="catalytic activity">
    <reaction evidence="1">
        <text>1-(9Z-octadecenoyl)-sn-glycero-3-phosphocholine + H2O = 1-(9Z-octadecenoyl)-sn-glycero-3-phosphate + choline + H(+)</text>
        <dbReference type="Rhea" id="RHEA:38915"/>
        <dbReference type="ChEBI" id="CHEBI:15354"/>
        <dbReference type="ChEBI" id="CHEBI:15377"/>
        <dbReference type="ChEBI" id="CHEBI:15378"/>
        <dbReference type="ChEBI" id="CHEBI:28610"/>
        <dbReference type="ChEBI" id="CHEBI:74544"/>
    </reaction>
</comment>
<comment type="catalytic activity">
    <reaction evidence="1">
        <text>1-O-hexadecyl-sn-glycero-3-phosphocholine + H2O = 1-O-hexadecyl-sn-glycero-3-phosphate + choline + H(+)</text>
        <dbReference type="Rhea" id="RHEA:41143"/>
        <dbReference type="ChEBI" id="CHEBI:15354"/>
        <dbReference type="ChEBI" id="CHEBI:15377"/>
        <dbReference type="ChEBI" id="CHEBI:15378"/>
        <dbReference type="ChEBI" id="CHEBI:64496"/>
        <dbReference type="ChEBI" id="CHEBI:77580"/>
    </reaction>
</comment>
<comment type="cofactor">
    <cofactor evidence="1">
        <name>Mg(2+)</name>
        <dbReference type="ChEBI" id="CHEBI:18420"/>
    </cofactor>
</comment>
<comment type="similarity">
    <text evidence="3">Belongs to the sphingomyelinase D/phospholipase D family.</text>
</comment>
<dbReference type="EC" id="3.1.4.-" evidence="1"/>
<dbReference type="EC" id="3.1.4.41" evidence="1"/>
<dbReference type="EMBL" id="L16585">
    <property type="protein sequence ID" value="AAB68401.1"/>
    <property type="molecule type" value="Genomic_DNA"/>
</dbReference>
<dbReference type="RefSeq" id="WP_023634800.1">
    <property type="nucleotide sequence ID" value="NZ_UFXR01000001.1"/>
</dbReference>
<dbReference type="SMR" id="Q59332"/>
<dbReference type="STRING" id="65058.Cul210931_0042"/>
<dbReference type="eggNOG" id="ENOG502ZB0H">
    <property type="taxonomic scope" value="Bacteria"/>
</dbReference>
<dbReference type="GO" id="GO:0050290">
    <property type="term" value="F:sphingomyelin phosphodiesterase D activity"/>
    <property type="evidence" value="ECO:0007669"/>
    <property type="project" value="UniProtKB-EC"/>
</dbReference>
<dbReference type="GO" id="GO:0016042">
    <property type="term" value="P:lipid catabolic process"/>
    <property type="evidence" value="ECO:0007669"/>
    <property type="project" value="UniProtKB-KW"/>
</dbReference>
<dbReference type="CDD" id="cd08576">
    <property type="entry name" value="GDPD_like_SMaseD_PLD"/>
    <property type="match status" value="1"/>
</dbReference>
<dbReference type="Gene3D" id="3.20.20.190">
    <property type="entry name" value="Phosphatidylinositol (PI) phosphodiesterase"/>
    <property type="match status" value="1"/>
</dbReference>
<dbReference type="InterPro" id="IPR017946">
    <property type="entry name" value="PLC-like_Pdiesterase_TIM-brl"/>
</dbReference>
<dbReference type="InterPro" id="IPR016674">
    <property type="entry name" value="SMase_D/PLipase_D"/>
</dbReference>
<dbReference type="PIRSF" id="PIRSF016632">
    <property type="entry name" value="Phospholipase_actinobac/fun"/>
    <property type="match status" value="1"/>
</dbReference>
<dbReference type="SUPFAM" id="SSF51695">
    <property type="entry name" value="PLC-like phosphodiesterases"/>
    <property type="match status" value="1"/>
</dbReference>
<proteinExistence type="inferred from homology"/>
<protein>
    <recommendedName>
        <fullName evidence="1">Phospholipase D</fullName>
        <shortName evidence="1">PLD</shortName>
        <ecNumber evidence="1">3.1.4.-</ecNumber>
    </recommendedName>
    <alternativeName>
        <fullName>Choline phosphatase</fullName>
    </alternativeName>
    <alternativeName>
        <fullName evidence="1">Sphingomyelinase D</fullName>
        <shortName evidence="1">SMaseD</shortName>
        <ecNumber evidence="1">3.1.4.41</ecNumber>
    </alternativeName>
</protein>
<reference key="1">
    <citation type="journal article" date="1995" name="Gene">
        <title>Toxic phospholipases D of Corynebacterium pseudotuberculosis, C. ulcerans and Arcanobacterium haemolyticum: cloning and sequence homology.</title>
        <authorList>
            <person name="McNamara P.J."/>
            <person name="Cuevas W.A."/>
            <person name="Songer J.G."/>
        </authorList>
    </citation>
    <scope>NUCLEOTIDE SEQUENCE [GENOMIC DNA]</scope>
    <source>
        <strain>ATCC 739</strain>
    </source>
</reference>
<gene>
    <name type="primary">pld</name>
</gene>
<accession>Q59332</accession>
<organism>
    <name type="scientific">Corynebacterium ulcerans</name>
    <dbReference type="NCBI Taxonomy" id="65058"/>
    <lineage>
        <taxon>Bacteria</taxon>
        <taxon>Bacillati</taxon>
        <taxon>Actinomycetota</taxon>
        <taxon>Actinomycetes</taxon>
        <taxon>Mycobacteriales</taxon>
        <taxon>Corynebacteriaceae</taxon>
        <taxon>Corynebacterium</taxon>
    </lineage>
</organism>
<keyword id="KW-0378">Hydrolase</keyword>
<keyword id="KW-0442">Lipid degradation</keyword>
<keyword id="KW-0443">Lipid metabolism</keyword>
<keyword id="KW-0732">Signal</keyword>
<keyword id="KW-0843">Virulence</keyword>
<name>PLD_CORUL</name>
<sequence>MKKKVVLFLSIIMGILFPVGNAVATPVSHDAASTGNRPVYAIAHRVLTTQGVDDAVAIGANALEIDFTAWRGGWWADHDGIPTSAGATAEAIFKHIAEKRNQGANITFTWLDIKNPDYCTDPHSVCSINALRDLARKYLEPAGVRVLYGFYKTVGGPGWKTITSDLRDNEAVALSGPTRDVLNDFAKAGDKILTKQKIADYGYYDINQGFGDCYGDGNKTCDQLRKSSEARDQGKLGKTFGWTITTGQDDRVNDLLGKAHVDGMIFGFKVTHFYRHADTENSFKAIKTWVDKHSDTHHLATAADNPW</sequence>
<feature type="signal peptide" evidence="1">
    <location>
        <begin position="1"/>
        <end position="24"/>
    </location>
</feature>
<feature type="chain" id="PRO_0000022067" description="Phospholipase D">
    <location>
        <begin position="25"/>
        <end position="307"/>
    </location>
</feature>
<feature type="active site" evidence="2">
    <location>
        <position position="44"/>
    </location>
</feature>
<evidence type="ECO:0000250" key="1">
    <source>
        <dbReference type="UniProtKB" id="P20626"/>
    </source>
</evidence>
<evidence type="ECO:0000255" key="2"/>
<evidence type="ECO:0000305" key="3"/>